<organism>
    <name type="scientific">Escherichia coli O157:H7 (strain EC4115 / EHEC)</name>
    <dbReference type="NCBI Taxonomy" id="444450"/>
    <lineage>
        <taxon>Bacteria</taxon>
        <taxon>Pseudomonadati</taxon>
        <taxon>Pseudomonadota</taxon>
        <taxon>Gammaproteobacteria</taxon>
        <taxon>Enterobacterales</taxon>
        <taxon>Enterobacteriaceae</taxon>
        <taxon>Escherichia</taxon>
    </lineage>
</organism>
<accession>B5YQA3</accession>
<comment type="similarity">
    <text evidence="1">Belongs to the UPF0149 family.</text>
</comment>
<name>YGFB_ECO5E</name>
<feature type="chain" id="PRO_1000120467" description="UPF0149 protein YgfB">
    <location>
        <begin position="1"/>
        <end position="192"/>
    </location>
</feature>
<sequence length="192" mass="21230">MSIQNEMPGYNEMNQYLNQQGTGLTPAEMHGLISGMICGGNDDSSWLPLLHDLTNEGMAFGHELAQALRKMHSATSDALQDDGFLFQLYLPDGDDVSVFDRADALAGWVNHFLLGLGVTQPKLDKVTGETGEAIDDLRNIAQLGYDEDEDQEELEMSLEEIIEYVRVAALLCHDTFTHPQPTAPEVQKPTLH</sequence>
<dbReference type="EMBL" id="CP001164">
    <property type="protein sequence ID" value="ACI36963.1"/>
    <property type="molecule type" value="Genomic_DNA"/>
</dbReference>
<dbReference type="RefSeq" id="WP_001295378.1">
    <property type="nucleotide sequence ID" value="NC_011353.1"/>
</dbReference>
<dbReference type="SMR" id="B5YQA3"/>
<dbReference type="GeneID" id="93779092"/>
<dbReference type="KEGG" id="ecf:ECH74115_4202"/>
<dbReference type="HOGENOM" id="CLU_085336_1_0_6"/>
<dbReference type="GO" id="GO:0005829">
    <property type="term" value="C:cytosol"/>
    <property type="evidence" value="ECO:0007669"/>
    <property type="project" value="TreeGrafter"/>
</dbReference>
<dbReference type="FunFam" id="1.20.120.740:FF:000001">
    <property type="entry name" value="UPF0149 protein YgfB"/>
    <property type="match status" value="1"/>
</dbReference>
<dbReference type="Gene3D" id="1.20.120.740">
    <property type="entry name" value="YgfB uncharacterised protein family UPF0149, PF03695"/>
    <property type="match status" value="1"/>
</dbReference>
<dbReference type="HAMAP" id="MF_00346">
    <property type="entry name" value="UPF0149"/>
    <property type="match status" value="1"/>
</dbReference>
<dbReference type="InterPro" id="IPR011978">
    <property type="entry name" value="YgfB-like"/>
</dbReference>
<dbReference type="InterPro" id="IPR036255">
    <property type="entry name" value="YgfB-like_sf"/>
</dbReference>
<dbReference type="NCBIfam" id="NF002477">
    <property type="entry name" value="PRK01736.1"/>
    <property type="match status" value="1"/>
</dbReference>
<dbReference type="NCBIfam" id="TIGR02292">
    <property type="entry name" value="ygfB_yecA"/>
    <property type="match status" value="1"/>
</dbReference>
<dbReference type="PANTHER" id="PTHR37528">
    <property type="entry name" value="UPF0149 PROTEIN YGFB"/>
    <property type="match status" value="1"/>
</dbReference>
<dbReference type="PANTHER" id="PTHR37528:SF1">
    <property type="entry name" value="UPF0149 PROTEIN YGFB"/>
    <property type="match status" value="1"/>
</dbReference>
<dbReference type="Pfam" id="PF03695">
    <property type="entry name" value="UPF0149"/>
    <property type="match status" value="1"/>
</dbReference>
<dbReference type="SUPFAM" id="SSF101327">
    <property type="entry name" value="YgfB-like"/>
    <property type="match status" value="1"/>
</dbReference>
<proteinExistence type="inferred from homology"/>
<reference key="1">
    <citation type="journal article" date="2011" name="Proc. Natl. Acad. Sci. U.S.A.">
        <title>Genomic anatomy of Escherichia coli O157:H7 outbreaks.</title>
        <authorList>
            <person name="Eppinger M."/>
            <person name="Mammel M.K."/>
            <person name="Leclerc J.E."/>
            <person name="Ravel J."/>
            <person name="Cebula T.A."/>
        </authorList>
    </citation>
    <scope>NUCLEOTIDE SEQUENCE [LARGE SCALE GENOMIC DNA]</scope>
    <source>
        <strain>EC4115 / EHEC</strain>
    </source>
</reference>
<evidence type="ECO:0000255" key="1">
    <source>
        <dbReference type="HAMAP-Rule" id="MF_00346"/>
    </source>
</evidence>
<gene>
    <name evidence="1" type="primary">ygfB</name>
    <name type="ordered locus">ECH74115_4202</name>
</gene>
<protein>
    <recommendedName>
        <fullName evidence="1">UPF0149 protein YgfB</fullName>
    </recommendedName>
</protein>